<protein>
    <recommendedName>
        <fullName evidence="1">Photosystem I iron-sulfur center</fullName>
        <ecNumber evidence="1">1.97.1.12</ecNumber>
    </recommendedName>
    <alternativeName>
        <fullName evidence="1">9 kDa polypeptide</fullName>
    </alternativeName>
    <alternativeName>
        <fullName evidence="1">PSI-C</fullName>
    </alternativeName>
    <alternativeName>
        <fullName evidence="1">Photosystem I subunit VII</fullName>
    </alternativeName>
    <alternativeName>
        <fullName evidence="1">PsaC</fullName>
    </alternativeName>
</protein>
<dbReference type="EC" id="1.97.1.12" evidence="1"/>
<dbReference type="EMBL" id="CP000806">
    <property type="protein sequence ID" value="ACB51097.1"/>
    <property type="molecule type" value="Genomic_DNA"/>
</dbReference>
<dbReference type="RefSeq" id="WP_008276077.1">
    <property type="nucleotide sequence ID" value="NC_010546.1"/>
</dbReference>
<dbReference type="SMR" id="B1WYT0"/>
<dbReference type="STRING" id="43989.cce_1747"/>
<dbReference type="KEGG" id="cyt:cce_1747"/>
<dbReference type="eggNOG" id="COG1143">
    <property type="taxonomic scope" value="Bacteria"/>
</dbReference>
<dbReference type="HOGENOM" id="CLU_139698_8_0_3"/>
<dbReference type="OrthoDB" id="9804603at2"/>
<dbReference type="Proteomes" id="UP000001203">
    <property type="component" value="Chromosome circular"/>
</dbReference>
<dbReference type="GO" id="GO:0009522">
    <property type="term" value="C:photosystem I"/>
    <property type="evidence" value="ECO:0007669"/>
    <property type="project" value="UniProtKB-KW"/>
</dbReference>
<dbReference type="GO" id="GO:0031676">
    <property type="term" value="C:plasma membrane-derived thylakoid membrane"/>
    <property type="evidence" value="ECO:0007669"/>
    <property type="project" value="UniProtKB-SubCell"/>
</dbReference>
<dbReference type="GO" id="GO:0051539">
    <property type="term" value="F:4 iron, 4 sulfur cluster binding"/>
    <property type="evidence" value="ECO:0007669"/>
    <property type="project" value="UniProtKB-KW"/>
</dbReference>
<dbReference type="GO" id="GO:0009055">
    <property type="term" value="F:electron transfer activity"/>
    <property type="evidence" value="ECO:0007669"/>
    <property type="project" value="UniProtKB-UniRule"/>
</dbReference>
<dbReference type="GO" id="GO:0046872">
    <property type="term" value="F:metal ion binding"/>
    <property type="evidence" value="ECO:0007669"/>
    <property type="project" value="UniProtKB-KW"/>
</dbReference>
<dbReference type="GO" id="GO:0016491">
    <property type="term" value="F:oxidoreductase activity"/>
    <property type="evidence" value="ECO:0007669"/>
    <property type="project" value="UniProtKB-KW"/>
</dbReference>
<dbReference type="GO" id="GO:0009773">
    <property type="term" value="P:photosynthetic electron transport in photosystem I"/>
    <property type="evidence" value="ECO:0007669"/>
    <property type="project" value="InterPro"/>
</dbReference>
<dbReference type="FunFam" id="3.30.70.20:FF:000001">
    <property type="entry name" value="Photosystem I iron-sulfur center"/>
    <property type="match status" value="1"/>
</dbReference>
<dbReference type="Gene3D" id="3.30.70.20">
    <property type="match status" value="1"/>
</dbReference>
<dbReference type="HAMAP" id="MF_01303">
    <property type="entry name" value="PSI_PsaC"/>
    <property type="match status" value="1"/>
</dbReference>
<dbReference type="InterPro" id="IPR017896">
    <property type="entry name" value="4Fe4S_Fe-S-bd"/>
</dbReference>
<dbReference type="InterPro" id="IPR017900">
    <property type="entry name" value="4Fe4S_Fe_S_CS"/>
</dbReference>
<dbReference type="InterPro" id="IPR050157">
    <property type="entry name" value="PSI_iron-sulfur_center"/>
</dbReference>
<dbReference type="InterPro" id="IPR017491">
    <property type="entry name" value="PSI_PsaC"/>
</dbReference>
<dbReference type="NCBIfam" id="TIGR03048">
    <property type="entry name" value="PS_I_psaC"/>
    <property type="match status" value="1"/>
</dbReference>
<dbReference type="PANTHER" id="PTHR24960:SF79">
    <property type="entry name" value="PHOTOSYSTEM I IRON-SULFUR CENTER"/>
    <property type="match status" value="1"/>
</dbReference>
<dbReference type="PANTHER" id="PTHR24960">
    <property type="entry name" value="PHOTOSYSTEM I IRON-SULFUR CENTER-RELATED"/>
    <property type="match status" value="1"/>
</dbReference>
<dbReference type="Pfam" id="PF12838">
    <property type="entry name" value="Fer4_7"/>
    <property type="match status" value="1"/>
</dbReference>
<dbReference type="SUPFAM" id="SSF54862">
    <property type="entry name" value="4Fe-4S ferredoxins"/>
    <property type="match status" value="1"/>
</dbReference>
<dbReference type="PROSITE" id="PS00198">
    <property type="entry name" value="4FE4S_FER_1"/>
    <property type="match status" value="2"/>
</dbReference>
<dbReference type="PROSITE" id="PS51379">
    <property type="entry name" value="4FE4S_FER_2"/>
    <property type="match status" value="2"/>
</dbReference>
<accession>B1WYT0</accession>
<keyword id="KW-0004">4Fe-4S</keyword>
<keyword id="KW-0249">Electron transport</keyword>
<keyword id="KW-0408">Iron</keyword>
<keyword id="KW-0411">Iron-sulfur</keyword>
<keyword id="KW-0472">Membrane</keyword>
<keyword id="KW-0479">Metal-binding</keyword>
<keyword id="KW-0560">Oxidoreductase</keyword>
<keyword id="KW-0602">Photosynthesis</keyword>
<keyword id="KW-0603">Photosystem I</keyword>
<keyword id="KW-1185">Reference proteome</keyword>
<keyword id="KW-0677">Repeat</keyword>
<keyword id="KW-0793">Thylakoid</keyword>
<keyword id="KW-0813">Transport</keyword>
<organism>
    <name type="scientific">Crocosphaera subtropica (strain ATCC 51142 / BH68)</name>
    <name type="common">Cyanothece sp. (strain ATCC 51142)</name>
    <dbReference type="NCBI Taxonomy" id="43989"/>
    <lineage>
        <taxon>Bacteria</taxon>
        <taxon>Bacillati</taxon>
        <taxon>Cyanobacteriota</taxon>
        <taxon>Cyanophyceae</taxon>
        <taxon>Oscillatoriophycideae</taxon>
        <taxon>Chroococcales</taxon>
        <taxon>Aphanothecaceae</taxon>
        <taxon>Crocosphaera</taxon>
        <taxon>Crocosphaera subtropica</taxon>
    </lineage>
</organism>
<name>PSAC_CROS5</name>
<feature type="chain" id="PRO_1000165364" description="Photosystem I iron-sulfur center">
    <location>
        <begin position="1"/>
        <end position="81"/>
    </location>
</feature>
<feature type="domain" description="4Fe-4S ferredoxin-type 1" evidence="1">
    <location>
        <begin position="1"/>
        <end position="31"/>
    </location>
</feature>
<feature type="domain" description="4Fe-4S ferredoxin-type 2" evidence="1">
    <location>
        <begin position="39"/>
        <end position="68"/>
    </location>
</feature>
<feature type="binding site" evidence="1">
    <location>
        <position position="11"/>
    </location>
    <ligand>
        <name>[4Fe-4S] cluster</name>
        <dbReference type="ChEBI" id="CHEBI:49883"/>
        <label>1</label>
    </ligand>
</feature>
<feature type="binding site" evidence="1">
    <location>
        <position position="14"/>
    </location>
    <ligand>
        <name>[4Fe-4S] cluster</name>
        <dbReference type="ChEBI" id="CHEBI:49883"/>
        <label>1</label>
    </ligand>
</feature>
<feature type="binding site" evidence="1">
    <location>
        <position position="17"/>
    </location>
    <ligand>
        <name>[4Fe-4S] cluster</name>
        <dbReference type="ChEBI" id="CHEBI:49883"/>
        <label>1</label>
    </ligand>
</feature>
<feature type="binding site" evidence="1">
    <location>
        <position position="21"/>
    </location>
    <ligand>
        <name>[4Fe-4S] cluster</name>
        <dbReference type="ChEBI" id="CHEBI:49883"/>
        <label>2</label>
    </ligand>
</feature>
<feature type="binding site" evidence="1">
    <location>
        <position position="48"/>
    </location>
    <ligand>
        <name>[4Fe-4S] cluster</name>
        <dbReference type="ChEBI" id="CHEBI:49883"/>
        <label>2</label>
    </ligand>
</feature>
<feature type="binding site" evidence="1">
    <location>
        <position position="51"/>
    </location>
    <ligand>
        <name>[4Fe-4S] cluster</name>
        <dbReference type="ChEBI" id="CHEBI:49883"/>
        <label>2</label>
    </ligand>
</feature>
<feature type="binding site" evidence="1">
    <location>
        <position position="54"/>
    </location>
    <ligand>
        <name>[4Fe-4S] cluster</name>
        <dbReference type="ChEBI" id="CHEBI:49883"/>
        <label>2</label>
    </ligand>
</feature>
<feature type="binding site" evidence="1">
    <location>
        <position position="58"/>
    </location>
    <ligand>
        <name>[4Fe-4S] cluster</name>
        <dbReference type="ChEBI" id="CHEBI:49883"/>
        <label>1</label>
    </ligand>
</feature>
<comment type="function">
    <text evidence="1">Apoprotein for the two 4Fe-4S centers FA and FB of photosystem I (PSI); essential for photochemical activity. FB is the terminal electron acceptor of PSI, donating electrons to ferredoxin. The C-terminus interacts with PsaA/B/D and helps assemble the protein into the PSI complex. Required for binding of PsaD and PsaE to PSI. PSI is a plastocyanin/cytochrome c6-ferredoxin oxidoreductase, converting photonic excitation into a charge separation, which transfers an electron from the donor P700 chlorophyll pair to the spectroscopically characterized acceptors A0, A1, FX, FA and FB in turn.</text>
</comment>
<comment type="catalytic activity">
    <reaction evidence="1">
        <text>reduced [plastocyanin] + hnu + oxidized [2Fe-2S]-[ferredoxin] = oxidized [plastocyanin] + reduced [2Fe-2S]-[ferredoxin]</text>
        <dbReference type="Rhea" id="RHEA:30407"/>
        <dbReference type="Rhea" id="RHEA-COMP:10000"/>
        <dbReference type="Rhea" id="RHEA-COMP:10001"/>
        <dbReference type="Rhea" id="RHEA-COMP:10039"/>
        <dbReference type="Rhea" id="RHEA-COMP:10040"/>
        <dbReference type="ChEBI" id="CHEBI:29036"/>
        <dbReference type="ChEBI" id="CHEBI:30212"/>
        <dbReference type="ChEBI" id="CHEBI:33737"/>
        <dbReference type="ChEBI" id="CHEBI:33738"/>
        <dbReference type="ChEBI" id="CHEBI:49552"/>
        <dbReference type="EC" id="1.97.1.12"/>
    </reaction>
</comment>
<comment type="cofactor">
    <cofactor evidence="1">
        <name>[4Fe-4S] cluster</name>
        <dbReference type="ChEBI" id="CHEBI:49883"/>
    </cofactor>
    <text evidence="1">Binds 2 [4Fe-4S] clusters. Cluster 2 is most probably the spectroscopically characterized electron acceptor FA and cluster 1 is most probably FB.</text>
</comment>
<comment type="subunit">
    <text evidence="1">The cyanobacterial PSI reaction center is composed of one copy each of PsaA,B,C,D,E,F,I,J,K,L,M and X, and forms trimeric complexes.</text>
</comment>
<comment type="subcellular location">
    <subcellularLocation>
        <location evidence="1">Cellular thylakoid membrane</location>
        <topology evidence="1">Peripheral membrane protein</topology>
        <orientation evidence="1">Cytoplasmic side</orientation>
    </subcellularLocation>
</comment>
<evidence type="ECO:0000255" key="1">
    <source>
        <dbReference type="HAMAP-Rule" id="MF_01303"/>
    </source>
</evidence>
<sequence length="81" mass="8885">MSHKVKIYDTCIGCTQCVRACPLDVLEMVPWDGCKASQIASSPRTEDCVGCKRCETACPTDFLSIRVYLGAETTRSMGLAY</sequence>
<reference key="1">
    <citation type="journal article" date="2008" name="Proc. Natl. Acad. Sci. U.S.A.">
        <title>The genome of Cyanothece 51142, a unicellular diazotrophic cyanobacterium important in the marine nitrogen cycle.</title>
        <authorList>
            <person name="Welsh E.A."/>
            <person name="Liberton M."/>
            <person name="Stoeckel J."/>
            <person name="Loh T."/>
            <person name="Elvitigala T."/>
            <person name="Wang C."/>
            <person name="Wollam A."/>
            <person name="Fulton R.S."/>
            <person name="Clifton S.W."/>
            <person name="Jacobs J.M."/>
            <person name="Aurora R."/>
            <person name="Ghosh B.K."/>
            <person name="Sherman L.A."/>
            <person name="Smith R.D."/>
            <person name="Wilson R.K."/>
            <person name="Pakrasi H.B."/>
        </authorList>
    </citation>
    <scope>NUCLEOTIDE SEQUENCE [LARGE SCALE GENOMIC DNA]</scope>
    <source>
        <strain>ATCC 51142 / BH68</strain>
    </source>
</reference>
<gene>
    <name evidence="1" type="primary">psaC</name>
    <name type="ordered locus">cce_1747</name>
</gene>
<proteinExistence type="inferred from homology"/>